<organism>
    <name type="scientific">Prochlorococcus marinus (strain MIT 9312)</name>
    <dbReference type="NCBI Taxonomy" id="74546"/>
    <lineage>
        <taxon>Bacteria</taxon>
        <taxon>Bacillati</taxon>
        <taxon>Cyanobacteriota</taxon>
        <taxon>Cyanophyceae</taxon>
        <taxon>Synechococcales</taxon>
        <taxon>Prochlorococcaceae</taxon>
        <taxon>Prochlorococcus</taxon>
    </lineage>
</organism>
<proteinExistence type="inferred from homology"/>
<feature type="chain" id="PRO_1000016959" description="Ribose-5-phosphate isomerase A">
    <location>
        <begin position="1"/>
        <end position="237"/>
    </location>
</feature>
<feature type="active site" description="Proton acceptor" evidence="1">
    <location>
        <position position="108"/>
    </location>
</feature>
<feature type="binding site" evidence="1">
    <location>
        <begin position="29"/>
        <end position="32"/>
    </location>
    <ligand>
        <name>substrate</name>
    </ligand>
</feature>
<feature type="binding site" evidence="1">
    <location>
        <begin position="86"/>
        <end position="89"/>
    </location>
    <ligand>
        <name>substrate</name>
    </ligand>
</feature>
<feature type="binding site" evidence="1">
    <location>
        <begin position="99"/>
        <end position="102"/>
    </location>
    <ligand>
        <name>substrate</name>
    </ligand>
</feature>
<feature type="binding site" evidence="1">
    <location>
        <position position="126"/>
    </location>
    <ligand>
        <name>substrate</name>
    </ligand>
</feature>
<dbReference type="EC" id="5.3.1.6" evidence="1"/>
<dbReference type="EMBL" id="CP000111">
    <property type="protein sequence ID" value="ABB50642.1"/>
    <property type="molecule type" value="Genomic_DNA"/>
</dbReference>
<dbReference type="RefSeq" id="WP_011377124.1">
    <property type="nucleotide sequence ID" value="NC_007577.1"/>
</dbReference>
<dbReference type="SMR" id="Q318Q3"/>
<dbReference type="STRING" id="74546.PMT9312_1582"/>
<dbReference type="KEGG" id="pmi:PMT9312_1582"/>
<dbReference type="eggNOG" id="COG0120">
    <property type="taxonomic scope" value="Bacteria"/>
</dbReference>
<dbReference type="HOGENOM" id="CLU_056590_1_1_3"/>
<dbReference type="UniPathway" id="UPA00115">
    <property type="reaction ID" value="UER00412"/>
</dbReference>
<dbReference type="Proteomes" id="UP000002715">
    <property type="component" value="Chromosome"/>
</dbReference>
<dbReference type="GO" id="GO:0005829">
    <property type="term" value="C:cytosol"/>
    <property type="evidence" value="ECO:0007669"/>
    <property type="project" value="TreeGrafter"/>
</dbReference>
<dbReference type="GO" id="GO:0004751">
    <property type="term" value="F:ribose-5-phosphate isomerase activity"/>
    <property type="evidence" value="ECO:0007669"/>
    <property type="project" value="UniProtKB-UniRule"/>
</dbReference>
<dbReference type="GO" id="GO:0006014">
    <property type="term" value="P:D-ribose metabolic process"/>
    <property type="evidence" value="ECO:0007669"/>
    <property type="project" value="TreeGrafter"/>
</dbReference>
<dbReference type="GO" id="GO:0009052">
    <property type="term" value="P:pentose-phosphate shunt, non-oxidative branch"/>
    <property type="evidence" value="ECO:0007669"/>
    <property type="project" value="UniProtKB-UniRule"/>
</dbReference>
<dbReference type="CDD" id="cd01398">
    <property type="entry name" value="RPI_A"/>
    <property type="match status" value="1"/>
</dbReference>
<dbReference type="FunFam" id="3.30.70.260:FF:000018">
    <property type="entry name" value="Ribose-5-phosphate isomerase A"/>
    <property type="match status" value="1"/>
</dbReference>
<dbReference type="FunFam" id="3.40.50.1360:FF:000001">
    <property type="entry name" value="Ribose-5-phosphate isomerase A"/>
    <property type="match status" value="1"/>
</dbReference>
<dbReference type="Gene3D" id="3.30.70.260">
    <property type="match status" value="1"/>
</dbReference>
<dbReference type="Gene3D" id="3.40.50.1360">
    <property type="match status" value="1"/>
</dbReference>
<dbReference type="HAMAP" id="MF_00170">
    <property type="entry name" value="Rib_5P_isom_A"/>
    <property type="match status" value="1"/>
</dbReference>
<dbReference type="InterPro" id="IPR037171">
    <property type="entry name" value="NagB/RpiA_transferase-like"/>
</dbReference>
<dbReference type="InterPro" id="IPR020672">
    <property type="entry name" value="Ribose5P_isomerase_typA_subgr"/>
</dbReference>
<dbReference type="InterPro" id="IPR004788">
    <property type="entry name" value="Ribose5P_isomerase_type_A"/>
</dbReference>
<dbReference type="NCBIfam" id="NF001924">
    <property type="entry name" value="PRK00702.1"/>
    <property type="match status" value="1"/>
</dbReference>
<dbReference type="NCBIfam" id="TIGR00021">
    <property type="entry name" value="rpiA"/>
    <property type="match status" value="1"/>
</dbReference>
<dbReference type="PANTHER" id="PTHR11934">
    <property type="entry name" value="RIBOSE-5-PHOSPHATE ISOMERASE"/>
    <property type="match status" value="1"/>
</dbReference>
<dbReference type="PANTHER" id="PTHR11934:SF0">
    <property type="entry name" value="RIBOSE-5-PHOSPHATE ISOMERASE"/>
    <property type="match status" value="1"/>
</dbReference>
<dbReference type="Pfam" id="PF06026">
    <property type="entry name" value="Rib_5-P_isom_A"/>
    <property type="match status" value="1"/>
</dbReference>
<dbReference type="SUPFAM" id="SSF75445">
    <property type="entry name" value="D-ribose-5-phosphate isomerase (RpiA), lid domain"/>
    <property type="match status" value="1"/>
</dbReference>
<dbReference type="SUPFAM" id="SSF100950">
    <property type="entry name" value="NagB/RpiA/CoA transferase-like"/>
    <property type="match status" value="1"/>
</dbReference>
<gene>
    <name evidence="1" type="primary">rpiA</name>
    <name type="ordered locus">PMT9312_1582</name>
</gene>
<name>RPIA_PROM9</name>
<comment type="function">
    <text evidence="1">Catalyzes the reversible conversion of ribose-5-phosphate to ribulose 5-phosphate.</text>
</comment>
<comment type="catalytic activity">
    <reaction evidence="1">
        <text>aldehydo-D-ribose 5-phosphate = D-ribulose 5-phosphate</text>
        <dbReference type="Rhea" id="RHEA:14657"/>
        <dbReference type="ChEBI" id="CHEBI:58121"/>
        <dbReference type="ChEBI" id="CHEBI:58273"/>
        <dbReference type="EC" id="5.3.1.6"/>
    </reaction>
</comment>
<comment type="pathway">
    <text evidence="1">Carbohydrate degradation; pentose phosphate pathway; D-ribose 5-phosphate from D-ribulose 5-phosphate (non-oxidative stage): step 1/1.</text>
</comment>
<comment type="subunit">
    <text evidence="1">Homodimer.</text>
</comment>
<comment type="similarity">
    <text evidence="1">Belongs to the ribose 5-phosphate isomerase family.</text>
</comment>
<reference key="1">
    <citation type="journal article" date="2006" name="Science">
        <title>Genomic islands and the ecology and evolution of Prochlorococcus.</title>
        <authorList>
            <person name="Coleman M.L."/>
            <person name="Sullivan M.B."/>
            <person name="Martiny A.C."/>
            <person name="Steglich C."/>
            <person name="Barry K."/>
            <person name="Delong E.F."/>
            <person name="Chisholm S.W."/>
        </authorList>
    </citation>
    <scope>NUCLEOTIDE SEQUENCE [LARGE SCALE GENOMIC DNA]</scope>
    <source>
        <strain>MIT 9312</strain>
    </source>
</reference>
<accession>Q318Q3</accession>
<protein>
    <recommendedName>
        <fullName evidence="1">Ribose-5-phosphate isomerase A</fullName>
        <ecNumber evidence="1">5.3.1.6</ecNumber>
    </recommendedName>
    <alternativeName>
        <fullName evidence="1">Phosphoriboisomerase A</fullName>
        <shortName evidence="1">PRI</shortName>
    </alternativeName>
</protein>
<evidence type="ECO:0000255" key="1">
    <source>
        <dbReference type="HAMAP-Rule" id="MF_00170"/>
    </source>
</evidence>
<keyword id="KW-0413">Isomerase</keyword>
<sequence>MNSQTQMKQIVAEAAIEEVKSDMILGLGSGSTAVLMIKSLADAIRSGKLQNIKGVATSFQSEVLALELDIPLIDLASVSQIDLAIDGADEVDPGFQLIKGGGACHVREKLVASKANQLLIVVDETKLVRKLNQSFPLPVEVLPNAWKQVQEVISEMNGISTLRMATKKAGPVVTDQGNLILDVLFNDGIKNPKDIEKSINNIPGVLENGLFIDLTDKVLVGKIENNIPVAYSPAKVG</sequence>